<gene>
    <name evidence="7" type="primary">astD</name>
    <name type="ORF">ATEG_04415</name>
</gene>
<reference key="1">
    <citation type="submission" date="2005-09" db="EMBL/GenBank/DDBJ databases">
        <title>Annotation of the Aspergillus terreus NIH2624 genome.</title>
        <authorList>
            <person name="Birren B.W."/>
            <person name="Lander E.S."/>
            <person name="Galagan J.E."/>
            <person name="Nusbaum C."/>
            <person name="Devon K."/>
            <person name="Henn M."/>
            <person name="Ma L.-J."/>
            <person name="Jaffe D.B."/>
            <person name="Butler J."/>
            <person name="Alvarez P."/>
            <person name="Gnerre S."/>
            <person name="Grabherr M."/>
            <person name="Kleber M."/>
            <person name="Mauceli E.W."/>
            <person name="Brockman W."/>
            <person name="Rounsley S."/>
            <person name="Young S.K."/>
            <person name="LaButti K."/>
            <person name="Pushparaj V."/>
            <person name="DeCaprio D."/>
            <person name="Crawford M."/>
            <person name="Koehrsen M."/>
            <person name="Engels R."/>
            <person name="Montgomery P."/>
            <person name="Pearson M."/>
            <person name="Howarth C."/>
            <person name="Larson L."/>
            <person name="Luoma S."/>
            <person name="White J."/>
            <person name="Alvarado L."/>
            <person name="Kodira C.D."/>
            <person name="Zeng Q."/>
            <person name="Oleary S."/>
            <person name="Yandava C."/>
            <person name="Denning D.W."/>
            <person name="Nierman W.C."/>
            <person name="Milne T."/>
            <person name="Madden K."/>
        </authorList>
    </citation>
    <scope>NUCLEOTIDE SEQUENCE [LARGE SCALE GENOMIC DNA]</scope>
    <source>
        <strain>NIH 2624 / FGSC A1156</strain>
    </source>
</reference>
<reference key="2">
    <citation type="journal article" date="2018" name="Nature">
        <title>Resistance-gene-directed discovery of a natural-product herbicide with a new mode of action.</title>
        <authorList>
            <person name="Yan Y."/>
            <person name="Liu Q."/>
            <person name="Zang X."/>
            <person name="Yuan S."/>
            <person name="Bat-Erdene U."/>
            <person name="Nguyen C."/>
            <person name="Gan J."/>
            <person name="Zhou J."/>
            <person name="Jacobsen S.E."/>
            <person name="Tang Y."/>
        </authorList>
    </citation>
    <scope>FUNCTION</scope>
    <scope>CATALYTIC ACTIVITY</scope>
    <scope>BIOPHYSICOCHEMICAL PROPERTIES</scope>
    <scope>DOMAIN</scope>
    <scope>ACTIVITY REGULATION</scope>
    <scope>PATHWAY</scope>
</reference>
<comment type="function">
    <text evidence="6">Dihydroxyacid dehydratase; part of the gene cluster that mediates the biosynthesis of the sesquiterpenoid aspterric acid (AA), an inhibitor of dihydroxy-acid dehydratase (DHAD) effective as an herbicide (PubMed:29995859). Performs the third step in the common pathway leading to biosynthesis of branched-chain amino acids (PubMed:29995859). Catalyzes the dehydration of (2R,3R)-2,3-dihydroxy-3-methylpentanoate (2,3-dihydroxy-3-methylvalerate) into 2-oxo-3-methylpentanoate (2-oxo-3-methylvalerate) and of (2R)-2,3-dihydroxy-3-methylbutanoate (2,3-dihydroxyisovalerate) into 2-oxo-3-methylbutanoate (2-oxoisovalerate), the penultimate precursor to L-isoleucine and L-valine, respectively (PubMed:29995859). AstD confers self-resistance in the presence of the dihydroxyacid dehydratase inhibitor aspterric acid (AA) produced by the ast cluster (PubMed:29995859).</text>
</comment>
<comment type="catalytic activity">
    <reaction evidence="6">
        <text>(2R)-2,3-dihydroxy-3-methylbutanoate = 3-methyl-2-oxobutanoate + H2O</text>
        <dbReference type="Rhea" id="RHEA:24809"/>
        <dbReference type="ChEBI" id="CHEBI:11851"/>
        <dbReference type="ChEBI" id="CHEBI:15377"/>
        <dbReference type="ChEBI" id="CHEBI:49072"/>
        <dbReference type="EC" id="4.2.1.9"/>
    </reaction>
    <physiologicalReaction direction="left-to-right" evidence="6">
        <dbReference type="Rhea" id="RHEA:24810"/>
    </physiologicalReaction>
</comment>
<comment type="catalytic activity">
    <reaction evidence="1">
        <text>(2R,3R)-2,3-dihydroxy-3-methylpentanoate = (S)-3-methyl-2-oxopentanoate + H2O</text>
        <dbReference type="Rhea" id="RHEA:27694"/>
        <dbReference type="ChEBI" id="CHEBI:15377"/>
        <dbReference type="ChEBI" id="CHEBI:35146"/>
        <dbReference type="ChEBI" id="CHEBI:49258"/>
        <dbReference type="EC" id="4.2.1.9"/>
    </reaction>
    <physiologicalReaction direction="left-to-right" evidence="1">
        <dbReference type="Rhea" id="RHEA:27695"/>
    </physiologicalReaction>
</comment>
<comment type="cofactor">
    <cofactor evidence="6">
        <name>[2Fe-2S] cluster</name>
        <dbReference type="ChEBI" id="CHEBI:190135"/>
    </cofactor>
    <text evidence="2">Binds 1 [2Fe-2S] cluster per subunit.</text>
</comment>
<comment type="cofactor">
    <cofactor evidence="6">
        <name>Mg(2+)</name>
        <dbReference type="ChEBI" id="CHEBI:18420"/>
    </cofactor>
</comment>
<comment type="activity regulation">
    <text evidence="6">DHAD activity is not inhibited by the dihydroxyacid dehydratase inhibitor aspterric acid (AA).</text>
</comment>
<comment type="pathway">
    <text evidence="6">Amino-acid biosynthesis; L-isoleucine biosynthesis; L-isoleucine from 2-oxobutanoate: step 3/4.</text>
</comment>
<comment type="pathway">
    <text evidence="6">Amino-acid biosynthesis; L-valine biosynthesis; L-valine from pyruvate: step 3/4.</text>
</comment>
<comment type="subcellular location">
    <subcellularLocation>
        <location evidence="2">Mitochondrion</location>
    </subcellularLocation>
</comment>
<comment type="domain">
    <text evidence="6">While most of the residues in the catalytic chamber are conserved when compared to the housekeeping DHAD, the hydrophobic region at the entrance to the reactive chamber in astD is more constricted as a result of two amino acid substitutions (V496L and I177L). Narrowing of the entrance could therefore sterically exclude the bulkier aspterric acid (AA) from binding in the active site, while the smaller, natural substrates are still able to enter the chamber.</text>
</comment>
<comment type="similarity">
    <text evidence="8">Belongs to the IlvD/Edd family.</text>
</comment>
<sequence length="598" mass="64548">MFASRIRSRALGLHPRARFENTRLPASTTGRRYKSDETLNRVSSKITQPKSQGASQAMLYATGLTEEDMSKPQVGISSVWFEGNPCNMHLHDLSAIVRDSVHRAGLVPMRFNSVGVSDGISMGTKGMRYSLQSRELIADGIETVMNAQWYDANVSLPGCDKNMPGVLMAMGRTNRPSIMVYGGSIKPGCSAKGQKLDLVSAFQSYGQFITGQIDEKERFDIIRNACPGRGACGGMYTANTLATAIETMGMTVPGSSSCPADDPKKLVECENIGEVVKTMLREDIKPRDVLTRQAFENAMIVVNILGGSTNAVLHLIAIADSVGIKLTIDDFQAVSDKTPFLADLKPSGKYLMNDLYNIGGTPALLKYLLKEGLIDGSGITVTGKTMKENVASWPDFPADQDIIRPLSNPIKPSGHLQILRGSLAPGGSVGKITGKEGLRFEGTAKCYDYEDAFIESLERGEIKKGEKTVVIIRYEGPKGGPGMPEMLKPSAAIMGAGLGQDVALLTDGRFSGGSHGFLIGHIVPEAMEGGPIALARDGDRIVIDAEERVVDLDIPTEELEKRRKEWKAPPLRYQKGTLKKYCTLVSDASHGCVTDGPI</sequence>
<evidence type="ECO:0000250" key="1">
    <source>
        <dbReference type="UniProtKB" id="P05791"/>
    </source>
</evidence>
<evidence type="ECO:0000250" key="2">
    <source>
        <dbReference type="UniProtKB" id="P39522"/>
    </source>
</evidence>
<evidence type="ECO:0000250" key="3">
    <source>
        <dbReference type="UniProtKB" id="P9WKJ5"/>
    </source>
</evidence>
<evidence type="ECO:0000255" key="4"/>
<evidence type="ECO:0000256" key="5">
    <source>
        <dbReference type="SAM" id="MobiDB-lite"/>
    </source>
</evidence>
<evidence type="ECO:0000269" key="6">
    <source>
    </source>
</evidence>
<evidence type="ECO:0000303" key="7">
    <source>
    </source>
</evidence>
<evidence type="ECO:0000305" key="8"/>
<dbReference type="EC" id="4.2.1.9" evidence="6"/>
<dbReference type="EMBL" id="CH476599">
    <property type="protein sequence ID" value="EAU34862.1"/>
    <property type="molecule type" value="Genomic_DNA"/>
</dbReference>
<dbReference type="RefSeq" id="XP_001213593.1">
    <property type="nucleotide sequence ID" value="XM_001213593.1"/>
</dbReference>
<dbReference type="SMR" id="Q0CPG9"/>
<dbReference type="STRING" id="341663.Q0CPG9"/>
<dbReference type="EnsemblFungi" id="EAU34862">
    <property type="protein sequence ID" value="EAU34862"/>
    <property type="gene ID" value="ATEG_04415"/>
</dbReference>
<dbReference type="GeneID" id="4320414"/>
<dbReference type="VEuPathDB" id="FungiDB:ATEG_04415"/>
<dbReference type="eggNOG" id="KOG2448">
    <property type="taxonomic scope" value="Eukaryota"/>
</dbReference>
<dbReference type="HOGENOM" id="CLU_014271_4_1_1"/>
<dbReference type="OMA" id="PFGRYVM"/>
<dbReference type="OrthoDB" id="238at2759"/>
<dbReference type="UniPathway" id="UPA00047">
    <property type="reaction ID" value="UER00057"/>
</dbReference>
<dbReference type="UniPathway" id="UPA00049">
    <property type="reaction ID" value="UER00061"/>
</dbReference>
<dbReference type="Proteomes" id="UP000007963">
    <property type="component" value="Unassembled WGS sequence"/>
</dbReference>
<dbReference type="GO" id="GO:0005739">
    <property type="term" value="C:mitochondrion"/>
    <property type="evidence" value="ECO:0007669"/>
    <property type="project" value="UniProtKB-SubCell"/>
</dbReference>
<dbReference type="GO" id="GO:0051537">
    <property type="term" value="F:2 iron, 2 sulfur cluster binding"/>
    <property type="evidence" value="ECO:0007669"/>
    <property type="project" value="UniProtKB-KW"/>
</dbReference>
<dbReference type="GO" id="GO:0004160">
    <property type="term" value="F:dihydroxy-acid dehydratase activity"/>
    <property type="evidence" value="ECO:0007669"/>
    <property type="project" value="InterPro"/>
</dbReference>
<dbReference type="GO" id="GO:0046872">
    <property type="term" value="F:metal ion binding"/>
    <property type="evidence" value="ECO:0007669"/>
    <property type="project" value="UniProtKB-KW"/>
</dbReference>
<dbReference type="GO" id="GO:0009097">
    <property type="term" value="P:isoleucine biosynthetic process"/>
    <property type="evidence" value="ECO:0007669"/>
    <property type="project" value="UniProtKB-UniPathway"/>
</dbReference>
<dbReference type="GO" id="GO:0009099">
    <property type="term" value="P:L-valine biosynthetic process"/>
    <property type="evidence" value="ECO:0007669"/>
    <property type="project" value="UniProtKB-UniPathway"/>
</dbReference>
<dbReference type="FunFam" id="3.50.30.80:FF:000001">
    <property type="entry name" value="Dihydroxy-acid dehydratase"/>
    <property type="match status" value="1"/>
</dbReference>
<dbReference type="Gene3D" id="3.50.30.80">
    <property type="entry name" value="IlvD/EDD C-terminal domain-like"/>
    <property type="match status" value="1"/>
</dbReference>
<dbReference type="HAMAP" id="MF_00012">
    <property type="entry name" value="IlvD"/>
    <property type="match status" value="1"/>
</dbReference>
<dbReference type="InterPro" id="IPR050165">
    <property type="entry name" value="DHAD_IlvD/Edd"/>
</dbReference>
<dbReference type="InterPro" id="IPR042096">
    <property type="entry name" value="Dihydro-acid_dehy_C"/>
</dbReference>
<dbReference type="InterPro" id="IPR004404">
    <property type="entry name" value="DihydroxyA_deHydtase"/>
</dbReference>
<dbReference type="InterPro" id="IPR020558">
    <property type="entry name" value="DiOHA_6PGluconate_deHydtase_CS"/>
</dbReference>
<dbReference type="InterPro" id="IPR056740">
    <property type="entry name" value="ILV_EDD_C"/>
</dbReference>
<dbReference type="InterPro" id="IPR000581">
    <property type="entry name" value="ILV_EDD_N"/>
</dbReference>
<dbReference type="InterPro" id="IPR037237">
    <property type="entry name" value="IlvD/EDD_N"/>
</dbReference>
<dbReference type="NCBIfam" id="TIGR00110">
    <property type="entry name" value="ilvD"/>
    <property type="match status" value="1"/>
</dbReference>
<dbReference type="NCBIfam" id="NF002068">
    <property type="entry name" value="PRK00911.1"/>
    <property type="match status" value="1"/>
</dbReference>
<dbReference type="PANTHER" id="PTHR21000">
    <property type="entry name" value="DIHYDROXY-ACID DEHYDRATASE DAD"/>
    <property type="match status" value="1"/>
</dbReference>
<dbReference type="PANTHER" id="PTHR21000:SF5">
    <property type="entry name" value="DIHYDROXY-ACID DEHYDRATASE, MITOCHONDRIAL"/>
    <property type="match status" value="1"/>
</dbReference>
<dbReference type="Pfam" id="PF24877">
    <property type="entry name" value="ILV_EDD_C"/>
    <property type="match status" value="1"/>
</dbReference>
<dbReference type="Pfam" id="PF00920">
    <property type="entry name" value="ILVD_EDD_N"/>
    <property type="match status" value="1"/>
</dbReference>
<dbReference type="SUPFAM" id="SSF143975">
    <property type="entry name" value="IlvD/EDD N-terminal domain-like"/>
    <property type="match status" value="1"/>
</dbReference>
<dbReference type="SUPFAM" id="SSF52016">
    <property type="entry name" value="LeuD/IlvD-like"/>
    <property type="match status" value="1"/>
</dbReference>
<dbReference type="PROSITE" id="PS00886">
    <property type="entry name" value="ILVD_EDD_1"/>
    <property type="match status" value="1"/>
</dbReference>
<dbReference type="PROSITE" id="PS00887">
    <property type="entry name" value="ILVD_EDD_2"/>
    <property type="match status" value="1"/>
</dbReference>
<accession>Q0CPG9</accession>
<name>ASTD_ASPTN</name>
<organism>
    <name type="scientific">Aspergillus terreus (strain NIH 2624 / FGSC A1156)</name>
    <dbReference type="NCBI Taxonomy" id="341663"/>
    <lineage>
        <taxon>Eukaryota</taxon>
        <taxon>Fungi</taxon>
        <taxon>Dikarya</taxon>
        <taxon>Ascomycota</taxon>
        <taxon>Pezizomycotina</taxon>
        <taxon>Eurotiomycetes</taxon>
        <taxon>Eurotiomycetidae</taxon>
        <taxon>Eurotiales</taxon>
        <taxon>Aspergillaceae</taxon>
        <taxon>Aspergillus</taxon>
        <taxon>Aspergillus subgen. Circumdati</taxon>
    </lineage>
</organism>
<protein>
    <recommendedName>
        <fullName evidence="7">Dihydroxy-acid dehydratase astD, mitochondrial</fullName>
        <shortName evidence="7">DHAD astD</shortName>
        <ecNumber evidence="6">4.2.1.9</ecNumber>
    </recommendedName>
    <alternativeName>
        <fullName evidence="7">Aspterric acid biosynthesis cluster protein D</fullName>
    </alternativeName>
</protein>
<proteinExistence type="evidence at protein level"/>
<keyword id="KW-0001">2Fe-2S</keyword>
<keyword id="KW-0028">Amino-acid biosynthesis</keyword>
<keyword id="KW-0100">Branched-chain amino acid biosynthesis</keyword>
<keyword id="KW-0408">Iron</keyword>
<keyword id="KW-0411">Iron-sulfur</keyword>
<keyword id="KW-0456">Lyase</keyword>
<keyword id="KW-0460">Magnesium</keyword>
<keyword id="KW-0479">Metal-binding</keyword>
<keyword id="KW-0496">Mitochondrion</keyword>
<keyword id="KW-1185">Reference proteome</keyword>
<keyword id="KW-0809">Transit peptide</keyword>
<feature type="transit peptide" description="Mitochondrion" evidence="4">
    <location>
        <begin position="1"/>
        <end position="111"/>
    </location>
</feature>
<feature type="chain" id="PRO_0000462101" description="Dihydroxy-acid dehydratase astD, mitochondrial">
    <location>
        <begin position="112"/>
        <end position="598"/>
    </location>
</feature>
<feature type="region of interest" description="Disordered" evidence="5">
    <location>
        <begin position="23"/>
        <end position="50"/>
    </location>
</feature>
<feature type="compositionally biased region" description="Polar residues" evidence="5">
    <location>
        <begin position="40"/>
        <end position="50"/>
    </location>
</feature>
<feature type="active site" description="Proton acceptor" evidence="3">
    <location>
        <position position="511"/>
    </location>
</feature>
<feature type="binding site" evidence="3">
    <location>
        <position position="86"/>
    </location>
    <ligand>
        <name>[2Fe-2S] cluster</name>
        <dbReference type="ChEBI" id="CHEBI:190135"/>
    </ligand>
</feature>
<feature type="binding site" evidence="3">
    <location>
        <position position="118"/>
    </location>
    <ligand>
        <name>Mg(2+)</name>
        <dbReference type="ChEBI" id="CHEBI:18420"/>
    </ligand>
</feature>
<feature type="binding site" evidence="3">
    <location>
        <position position="159"/>
    </location>
    <ligand>
        <name>[2Fe-2S] cluster</name>
        <dbReference type="ChEBI" id="CHEBI:190135"/>
    </ligand>
</feature>
<feature type="binding site" evidence="3">
    <location>
        <position position="160"/>
    </location>
    <ligand>
        <name>Mg(2+)</name>
        <dbReference type="ChEBI" id="CHEBI:18420"/>
    </ligand>
</feature>
<feature type="binding site" evidence="3">
    <location>
        <position position="232"/>
    </location>
    <ligand>
        <name>[2Fe-2S] cluster</name>
        <dbReference type="ChEBI" id="CHEBI:190135"/>
    </ligand>
</feature>
<feature type="binding site" evidence="3">
    <location>
        <position position="485"/>
    </location>
    <ligand>
        <name>Mg(2+)</name>
        <dbReference type="ChEBI" id="CHEBI:18420"/>
    </ligand>
</feature>